<feature type="chain" id="PRO_0000070045" description="P2Y purinoceptor 14">
    <location>
        <begin position="1"/>
        <end position="338"/>
    </location>
</feature>
<feature type="topological domain" description="Extracellular" evidence="2">
    <location>
        <begin position="1"/>
        <end position="29"/>
    </location>
</feature>
<feature type="transmembrane region" description="Helical; Name=1" evidence="2">
    <location>
        <begin position="30"/>
        <end position="50"/>
    </location>
</feature>
<feature type="topological domain" description="Cytoplasmic" evidence="2">
    <location>
        <begin position="51"/>
        <end position="55"/>
    </location>
</feature>
<feature type="transmembrane region" description="Helical; Name=2" evidence="2">
    <location>
        <begin position="56"/>
        <end position="76"/>
    </location>
</feature>
<feature type="topological domain" description="Extracellular" evidence="2">
    <location>
        <begin position="77"/>
        <end position="96"/>
    </location>
</feature>
<feature type="transmembrane region" description="Helical; Name=3" evidence="2">
    <location>
        <begin position="97"/>
        <end position="117"/>
    </location>
</feature>
<feature type="topological domain" description="Cytoplasmic" evidence="2">
    <location>
        <begin position="118"/>
        <end position="139"/>
    </location>
</feature>
<feature type="transmembrane region" description="Helical; Name=4" evidence="2">
    <location>
        <begin position="140"/>
        <end position="160"/>
    </location>
</feature>
<feature type="topological domain" description="Extracellular" evidence="2">
    <location>
        <begin position="161"/>
        <end position="188"/>
    </location>
</feature>
<feature type="transmembrane region" description="Helical; Name=5" evidence="2">
    <location>
        <begin position="189"/>
        <end position="209"/>
    </location>
</feature>
<feature type="topological domain" description="Cytoplasmic" evidence="2">
    <location>
        <begin position="210"/>
        <end position="234"/>
    </location>
</feature>
<feature type="transmembrane region" description="Helical; Name=6" evidence="2">
    <location>
        <begin position="235"/>
        <end position="255"/>
    </location>
</feature>
<feature type="topological domain" description="Extracellular" evidence="2">
    <location>
        <begin position="256"/>
        <end position="278"/>
    </location>
</feature>
<feature type="transmembrane region" description="Helical; Name=7" evidence="2">
    <location>
        <begin position="279"/>
        <end position="299"/>
    </location>
</feature>
<feature type="topological domain" description="Cytoplasmic" evidence="2">
    <location>
        <begin position="300"/>
        <end position="338"/>
    </location>
</feature>
<feature type="glycosylation site" description="N-linked (GlcNAc...) asparagine" evidence="2">
    <location>
        <position position="2"/>
    </location>
</feature>
<feature type="glycosylation site" description="N-linked (GlcNAc...) asparagine" evidence="2">
    <location>
        <position position="3"/>
    </location>
</feature>
<feature type="disulfide bond" evidence="3">
    <location>
        <begin position="94"/>
        <end position="172"/>
    </location>
</feature>
<dbReference type="EMBL" id="AF177211">
    <property type="protein sequence ID" value="AAG09275.1"/>
    <property type="molecule type" value="mRNA"/>
</dbReference>
<dbReference type="EMBL" id="BC028995">
    <property type="protein sequence ID" value="AAH28995.1"/>
    <property type="molecule type" value="mRNA"/>
</dbReference>
<dbReference type="EMBL" id="BC058558">
    <property type="protein sequence ID" value="AAH58558.1"/>
    <property type="molecule type" value="mRNA"/>
</dbReference>
<dbReference type="CCDS" id="CCDS17371.1"/>
<dbReference type="RefSeq" id="NP_001008497.1">
    <property type="nucleotide sequence ID" value="NM_001008497.2"/>
</dbReference>
<dbReference type="RefSeq" id="NP_001274048.1">
    <property type="nucleotide sequence ID" value="NM_001287119.1"/>
</dbReference>
<dbReference type="RefSeq" id="NP_001274049.1">
    <property type="nucleotide sequence ID" value="NM_001287120.1"/>
</dbReference>
<dbReference type="RefSeq" id="NP_001274050.1">
    <property type="nucleotide sequence ID" value="NM_001287121.1"/>
</dbReference>
<dbReference type="RefSeq" id="NP_001274051.1">
    <property type="nucleotide sequence ID" value="NM_001287122.1"/>
</dbReference>
<dbReference type="RefSeq" id="NP_001274052.1">
    <property type="nucleotide sequence ID" value="NM_001287123.1"/>
</dbReference>
<dbReference type="RefSeq" id="NP_573463.1">
    <property type="nucleotide sequence ID" value="NM_133200.4"/>
</dbReference>
<dbReference type="SMR" id="Q9ESG6"/>
<dbReference type="FunCoup" id="Q9ESG6">
    <property type="interactions" value="433"/>
</dbReference>
<dbReference type="STRING" id="10090.ENSMUSP00000142934"/>
<dbReference type="BindingDB" id="Q9ESG6"/>
<dbReference type="ChEMBL" id="CHEMBL1770046"/>
<dbReference type="GuidetoPHARMACOLOGY" id="330"/>
<dbReference type="GlyCosmos" id="Q9ESG6">
    <property type="glycosylation" value="2 sites, No reported glycans"/>
</dbReference>
<dbReference type="GlyGen" id="Q9ESG6">
    <property type="glycosylation" value="2 sites"/>
</dbReference>
<dbReference type="iPTMnet" id="Q9ESG6"/>
<dbReference type="PhosphoSitePlus" id="Q9ESG6"/>
<dbReference type="PaxDb" id="10090-ENSMUSP00000088642"/>
<dbReference type="ProteomicsDB" id="294089"/>
<dbReference type="Antibodypedia" id="18296">
    <property type="antibodies" value="246 antibodies from 30 providers"/>
</dbReference>
<dbReference type="DNASU" id="140795"/>
<dbReference type="Ensembl" id="ENSMUST00000065220.13">
    <property type="protein sequence ID" value="ENSMUSP00000066669.7"/>
    <property type="gene ID" value="ENSMUSG00000036381.14"/>
</dbReference>
<dbReference type="Ensembl" id="ENSMUST00000091112.6">
    <property type="protein sequence ID" value="ENSMUSP00000088642.5"/>
    <property type="gene ID" value="ENSMUSG00000036381.14"/>
</dbReference>
<dbReference type="Ensembl" id="ENSMUST00000196081.5">
    <property type="protein sequence ID" value="ENSMUSP00000142601.2"/>
    <property type="gene ID" value="ENSMUSG00000036381.14"/>
</dbReference>
<dbReference type="Ensembl" id="ENSMUST00000197220.2">
    <property type="protein sequence ID" value="ENSMUSP00000143070.2"/>
    <property type="gene ID" value="ENSMUSG00000036381.14"/>
</dbReference>
<dbReference type="GeneID" id="140795"/>
<dbReference type="KEGG" id="mmu:140795"/>
<dbReference type="UCSC" id="uc008pik.2">
    <property type="organism name" value="mouse"/>
</dbReference>
<dbReference type="AGR" id="MGI:2155705"/>
<dbReference type="CTD" id="9934"/>
<dbReference type="MGI" id="MGI:2155705">
    <property type="gene designation" value="P2ry14"/>
</dbReference>
<dbReference type="VEuPathDB" id="HostDB:ENSMUSG00000036381"/>
<dbReference type="eggNOG" id="ENOG502R537">
    <property type="taxonomic scope" value="Eukaryota"/>
</dbReference>
<dbReference type="GeneTree" id="ENSGT01110000267255"/>
<dbReference type="HOGENOM" id="CLU_009579_8_2_1"/>
<dbReference type="InParanoid" id="Q9ESG6"/>
<dbReference type="OMA" id="CHLWIFN"/>
<dbReference type="OrthoDB" id="6163051at2759"/>
<dbReference type="PhylomeDB" id="Q9ESG6"/>
<dbReference type="TreeFam" id="TF330969"/>
<dbReference type="Reactome" id="R-MMU-417957">
    <property type="pathway name" value="P2Y receptors"/>
</dbReference>
<dbReference type="Reactome" id="R-MMU-418594">
    <property type="pathway name" value="G alpha (i) signalling events"/>
</dbReference>
<dbReference type="BioGRID-ORCS" id="140795">
    <property type="hits" value="6 hits in 75 CRISPR screens"/>
</dbReference>
<dbReference type="ChiTaRS" id="P2ry14">
    <property type="organism name" value="mouse"/>
</dbReference>
<dbReference type="PRO" id="PR:Q9ESG6"/>
<dbReference type="Proteomes" id="UP000000589">
    <property type="component" value="Chromosome 3"/>
</dbReference>
<dbReference type="RNAct" id="Q9ESG6">
    <property type="molecule type" value="protein"/>
</dbReference>
<dbReference type="Bgee" id="ENSMUSG00000036381">
    <property type="expression patterns" value="Expressed in uterine cervix and 135 other cell types or tissues"/>
</dbReference>
<dbReference type="ExpressionAtlas" id="Q9ESG6">
    <property type="expression patterns" value="baseline and differential"/>
</dbReference>
<dbReference type="GO" id="GO:0005886">
    <property type="term" value="C:plasma membrane"/>
    <property type="evidence" value="ECO:0007669"/>
    <property type="project" value="UniProtKB-SubCell"/>
</dbReference>
<dbReference type="GO" id="GO:0045028">
    <property type="term" value="F:G protein-coupled purinergic nucleotide receptor activity"/>
    <property type="evidence" value="ECO:0007669"/>
    <property type="project" value="InterPro"/>
</dbReference>
<dbReference type="GO" id="GO:0061484">
    <property type="term" value="P:hematopoietic stem cell homeostasis"/>
    <property type="evidence" value="ECO:0000315"/>
    <property type="project" value="MGI"/>
</dbReference>
<dbReference type="FunFam" id="1.20.1070.10:FF:000049">
    <property type="entry name" value="G-protein coupled receptor 87"/>
    <property type="match status" value="1"/>
</dbReference>
<dbReference type="Gene3D" id="1.20.1070.10">
    <property type="entry name" value="Rhodopsin 7-helix transmembrane proteins"/>
    <property type="match status" value="1"/>
</dbReference>
<dbReference type="InterPro" id="IPR000276">
    <property type="entry name" value="GPCR_Rhodpsn"/>
</dbReference>
<dbReference type="InterPro" id="IPR017452">
    <property type="entry name" value="GPCR_Rhodpsn_7TM"/>
</dbReference>
<dbReference type="InterPro" id="IPR005466">
    <property type="entry name" value="P2Y14_rcpt"/>
</dbReference>
<dbReference type="PANTHER" id="PTHR24233:SF3">
    <property type="entry name" value="P2Y PURINOCEPTOR 14"/>
    <property type="match status" value="1"/>
</dbReference>
<dbReference type="PANTHER" id="PTHR24233">
    <property type="entry name" value="P2Y PURINOCEPTOR-RELATED G-PROTEIN COUPLED RECEPTOR"/>
    <property type="match status" value="1"/>
</dbReference>
<dbReference type="Pfam" id="PF00001">
    <property type="entry name" value="7tm_1"/>
    <property type="match status" value="1"/>
</dbReference>
<dbReference type="PRINTS" id="PR00237">
    <property type="entry name" value="GPCRRHODOPSN"/>
</dbReference>
<dbReference type="PRINTS" id="PR01157">
    <property type="entry name" value="P2YPURNOCPTR"/>
</dbReference>
<dbReference type="PRINTS" id="PR01655">
    <property type="entry name" value="UDPGLUCOSER"/>
</dbReference>
<dbReference type="SUPFAM" id="SSF81321">
    <property type="entry name" value="Family A G protein-coupled receptor-like"/>
    <property type="match status" value="1"/>
</dbReference>
<dbReference type="PROSITE" id="PS50262">
    <property type="entry name" value="G_PROTEIN_RECEP_F1_2"/>
    <property type="match status" value="1"/>
</dbReference>
<protein>
    <recommendedName>
        <fullName>P2Y purinoceptor 14</fullName>
        <shortName>P2Y14</shortName>
    </recommendedName>
    <alternativeName>
        <fullName>G-protein coupled receptor 105</fullName>
    </alternativeName>
    <alternativeName>
        <fullName>UDP-glucose receptor</fullName>
    </alternativeName>
</protein>
<reference key="1">
    <citation type="submission" date="1999-08" db="EMBL/GenBank/DDBJ databases">
        <title>7 transmembrane G protein coupled receptor from hematopoietic progenitors.</title>
        <authorList>
            <person name="Lee B.C."/>
            <person name="Scadden D.T."/>
        </authorList>
    </citation>
    <scope>NUCLEOTIDE SEQUENCE [MRNA]</scope>
</reference>
<reference key="2">
    <citation type="journal article" date="2004" name="Genome Res.">
        <title>The status, quality, and expansion of the NIH full-length cDNA project: the Mammalian Gene Collection (MGC).</title>
        <authorList>
            <consortium name="The MGC Project Team"/>
        </authorList>
    </citation>
    <scope>NUCLEOTIDE SEQUENCE [LARGE SCALE MRNA]</scope>
    <source>
        <strain>C57BL/6J</strain>
        <tissue>Olfactory epithelium</tissue>
        <tissue>Retina</tissue>
    </source>
</reference>
<proteinExistence type="evidence at transcript level"/>
<evidence type="ECO:0000250" key="1"/>
<evidence type="ECO:0000255" key="2"/>
<evidence type="ECO:0000255" key="3">
    <source>
        <dbReference type="PROSITE-ProRule" id="PRU00521"/>
    </source>
</evidence>
<keyword id="KW-1003">Cell membrane</keyword>
<keyword id="KW-1015">Disulfide bond</keyword>
<keyword id="KW-0297">G-protein coupled receptor</keyword>
<keyword id="KW-0325">Glycoprotein</keyword>
<keyword id="KW-0472">Membrane</keyword>
<keyword id="KW-0675">Receptor</keyword>
<keyword id="KW-1185">Reference proteome</keyword>
<keyword id="KW-0807">Transducer</keyword>
<keyword id="KW-0812">Transmembrane</keyword>
<keyword id="KW-1133">Transmembrane helix</keyword>
<gene>
    <name type="primary">P2ry14</name>
    <name type="synonym">Gpr105</name>
</gene>
<comment type="function">
    <text evidence="1">Receptor for UDP-glucose coupled to G-proteins.</text>
</comment>
<comment type="subcellular location">
    <subcellularLocation>
        <location>Cell membrane</location>
        <topology>Multi-pass membrane protein</topology>
    </subcellularLocation>
</comment>
<comment type="similarity">
    <text evidence="3">Belongs to the G-protein coupled receptor 1 family.</text>
</comment>
<accession>Q9ESG6</accession>
<organism>
    <name type="scientific">Mus musculus</name>
    <name type="common">Mouse</name>
    <dbReference type="NCBI Taxonomy" id="10090"/>
    <lineage>
        <taxon>Eukaryota</taxon>
        <taxon>Metazoa</taxon>
        <taxon>Chordata</taxon>
        <taxon>Craniata</taxon>
        <taxon>Vertebrata</taxon>
        <taxon>Euteleostomi</taxon>
        <taxon>Mammalia</taxon>
        <taxon>Eutheria</taxon>
        <taxon>Euarchontoglires</taxon>
        <taxon>Glires</taxon>
        <taxon>Rodentia</taxon>
        <taxon>Myomorpha</taxon>
        <taxon>Muroidea</taxon>
        <taxon>Muridae</taxon>
        <taxon>Murinae</taxon>
        <taxon>Mus</taxon>
        <taxon>Mus</taxon>
    </lineage>
</organism>
<sequence>MNNSTTTDPPNQPCSWNTLITKQIIPVLYGMVFITGLLLNGISGWIFFYVPSSKSFIIYLKNIVVADFLMGLTFPFKVLGDSGLGPWQVNVFVCRVSAVIFYVNMYVSIVFFGLISFDRYYKIVKPLLTSIVQSVNYSKLLSVLVWMLMLLLAVPNIILTNQGVKEVTKIQCMELKNELGRKWHKASNYIFVSIFWVVFLLLIVFYTAITRKIFKSHLKSRKNSTSVKRKSSRNIFSIVLVFVVCFVPYHIARIPYTKSQTEGHYSCRTKETLLYAKEFTLLLSAANVCLDPIIYFFLCQPFREVLNKKLHMSLKVQNDLEVSKTKRENAIHESTDTL</sequence>
<name>P2Y14_MOUSE</name>